<name>FCTA_STRAW</name>
<sequence length="409" mass="44360">MTKALEGIRVLDMTHVQSGPSATQLLAWLGADVVKLEAPTGDITRGQLRDLPDVDSLYFTMLNCNKRSITLNTKTERGKEILTELIRRSDVMVENFGPGAVDRMGFTWDRIRDINPRIVYASIKGFGDGPYTDFKAYEVVAQAMGGSMSTTGFEDGPPLATGAQIGDSGTGIHAVAGILAALYQRENTGRGQRVNVAMQHAVLNLCRVKLRDQQRLAHGPLAEYPNDDFGDEVPRSGNASGGGQPGWAVKCAPGGPNDYVYVIVQPVGWKPLSELIGRPELADDPEWATPEARLPQLTKMFQLIEEWSATLPKWEVLEKLNAHNIPCGPILSTKEIVEDASLVANEMVVTVPHPERGEFVTVGSPLKLSDSPVDVTSSPLLGEHNAEVYVGELGLGDEELRLLKSNGVI</sequence>
<protein>
    <recommendedName>
        <fullName>Formyl-CoA:oxalate CoA-transferase</fullName>
        <shortName>FCOCT</shortName>
        <ecNumber evidence="2">2.8.3.16</ecNumber>
    </recommendedName>
    <alternativeName>
        <fullName evidence="2">Formyl-coenzyme A transferase</fullName>
        <shortName evidence="2">Formyl-CoA transferase</shortName>
    </alternativeName>
</protein>
<feature type="chain" id="PRO_0000194723" description="Formyl-CoA:oxalate CoA-transferase">
    <location>
        <begin position="1"/>
        <end position="409"/>
    </location>
</feature>
<feature type="region of interest" description="Disordered" evidence="3">
    <location>
        <begin position="221"/>
        <end position="245"/>
    </location>
</feature>
<feature type="active site" description="Nucleophile" evidence="2">
    <location>
        <position position="167"/>
    </location>
</feature>
<feature type="binding site" evidence="1">
    <location>
        <begin position="17"/>
        <end position="18"/>
    </location>
    <ligand>
        <name>CoA</name>
        <dbReference type="ChEBI" id="CHEBI:57287"/>
    </ligand>
</feature>
<feature type="binding site" evidence="1">
    <location>
        <begin position="71"/>
        <end position="74"/>
    </location>
    <ligand>
        <name>CoA</name>
        <dbReference type="ChEBI" id="CHEBI:57287"/>
    </ligand>
</feature>
<feature type="binding site" evidence="1">
    <location>
        <begin position="95"/>
        <end position="97"/>
    </location>
    <ligand>
        <name>CoA</name>
        <dbReference type="ChEBI" id="CHEBI:57287"/>
    </ligand>
</feature>
<feature type="binding site" evidence="2">
    <location>
        <position position="103"/>
    </location>
    <ligand>
        <name>CoA</name>
        <dbReference type="ChEBI" id="CHEBI:57287"/>
    </ligand>
</feature>
<feature type="binding site" evidence="1">
    <location>
        <begin position="135"/>
        <end position="138"/>
    </location>
    <ligand>
        <name>CoA</name>
        <dbReference type="ChEBI" id="CHEBI:57287"/>
    </ligand>
</feature>
<feature type="binding site" evidence="1">
    <location>
        <begin position="242"/>
        <end position="244"/>
    </location>
    <ligand>
        <name>substrate</name>
    </ligand>
</feature>
<evidence type="ECO:0000250" key="1"/>
<evidence type="ECO:0000255" key="2">
    <source>
        <dbReference type="HAMAP-Rule" id="MF_00742"/>
    </source>
</evidence>
<evidence type="ECO:0000256" key="3">
    <source>
        <dbReference type="SAM" id="MobiDB-lite"/>
    </source>
</evidence>
<gene>
    <name evidence="2" type="primary">frc</name>
    <name type="ordered locus">SAV_1820</name>
</gene>
<dbReference type="EC" id="2.8.3.16" evidence="2"/>
<dbReference type="EMBL" id="BA000030">
    <property type="protein sequence ID" value="BAC69531.1"/>
    <property type="molecule type" value="Genomic_DNA"/>
</dbReference>
<dbReference type="RefSeq" id="WP_010983259.1">
    <property type="nucleotide sequence ID" value="NZ_JZJK01000086.1"/>
</dbReference>
<dbReference type="SMR" id="Q82M40"/>
<dbReference type="GeneID" id="41538921"/>
<dbReference type="KEGG" id="sma:SAVERM_1820"/>
<dbReference type="eggNOG" id="COG1804">
    <property type="taxonomic scope" value="Bacteria"/>
</dbReference>
<dbReference type="HOGENOM" id="CLU_033975_2_1_11"/>
<dbReference type="OrthoDB" id="9797653at2"/>
<dbReference type="BRENDA" id="2.8.3.16">
    <property type="organism ID" value="5980"/>
</dbReference>
<dbReference type="UniPathway" id="UPA00540">
    <property type="reaction ID" value="UER00598"/>
</dbReference>
<dbReference type="Proteomes" id="UP000000428">
    <property type="component" value="Chromosome"/>
</dbReference>
<dbReference type="GO" id="GO:0033608">
    <property type="term" value="F:formyl-CoA transferase activity"/>
    <property type="evidence" value="ECO:0007669"/>
    <property type="project" value="UniProtKB-EC"/>
</dbReference>
<dbReference type="GO" id="GO:0033611">
    <property type="term" value="P:oxalate catabolic process"/>
    <property type="evidence" value="ECO:0007669"/>
    <property type="project" value="UniProtKB-UniRule"/>
</dbReference>
<dbReference type="Gene3D" id="3.40.50.10540">
    <property type="entry name" value="Crotonobetainyl-coa:carnitine coa-transferase, domain 1"/>
    <property type="match status" value="1"/>
</dbReference>
<dbReference type="Gene3D" id="3.30.1540.10">
    <property type="entry name" value="formyl-coa transferase, domain 3"/>
    <property type="match status" value="1"/>
</dbReference>
<dbReference type="HAMAP" id="MF_00742">
    <property type="entry name" value="Formyl_CoA_transfer"/>
    <property type="match status" value="1"/>
</dbReference>
<dbReference type="InterPro" id="IPR050483">
    <property type="entry name" value="CoA-transferase_III_domain"/>
</dbReference>
<dbReference type="InterPro" id="IPR003673">
    <property type="entry name" value="CoA-Trfase_fam_III"/>
</dbReference>
<dbReference type="InterPro" id="IPR044855">
    <property type="entry name" value="CoA-Trfase_III_dom3_sf"/>
</dbReference>
<dbReference type="InterPro" id="IPR023606">
    <property type="entry name" value="CoA-Trfase_III_dom_1_sf"/>
</dbReference>
<dbReference type="InterPro" id="IPR017659">
    <property type="entry name" value="Formyl_CoA_transfer"/>
</dbReference>
<dbReference type="NCBIfam" id="TIGR03253">
    <property type="entry name" value="oxalate_frc"/>
    <property type="match status" value="1"/>
</dbReference>
<dbReference type="NCBIfam" id="NF003809">
    <property type="entry name" value="PRK05398.1"/>
    <property type="match status" value="1"/>
</dbReference>
<dbReference type="PANTHER" id="PTHR48207">
    <property type="entry name" value="SUCCINATE--HYDROXYMETHYLGLUTARATE COA-TRANSFERASE"/>
    <property type="match status" value="1"/>
</dbReference>
<dbReference type="PANTHER" id="PTHR48207:SF3">
    <property type="entry name" value="SUCCINATE--HYDROXYMETHYLGLUTARATE COA-TRANSFERASE"/>
    <property type="match status" value="1"/>
</dbReference>
<dbReference type="Pfam" id="PF02515">
    <property type="entry name" value="CoA_transf_3"/>
    <property type="match status" value="1"/>
</dbReference>
<dbReference type="SUPFAM" id="SSF89796">
    <property type="entry name" value="CoA-transferase family III (CaiB/BaiF)"/>
    <property type="match status" value="1"/>
</dbReference>
<reference key="1">
    <citation type="journal article" date="2001" name="Proc. Natl. Acad. Sci. U.S.A.">
        <title>Genome sequence of an industrial microorganism Streptomyces avermitilis: deducing the ability of producing secondary metabolites.</title>
        <authorList>
            <person name="Omura S."/>
            <person name="Ikeda H."/>
            <person name="Ishikawa J."/>
            <person name="Hanamoto A."/>
            <person name="Takahashi C."/>
            <person name="Shinose M."/>
            <person name="Takahashi Y."/>
            <person name="Horikawa H."/>
            <person name="Nakazawa H."/>
            <person name="Osonoe T."/>
            <person name="Kikuchi H."/>
            <person name="Shiba T."/>
            <person name="Sakaki Y."/>
            <person name="Hattori M."/>
        </authorList>
    </citation>
    <scope>NUCLEOTIDE SEQUENCE [LARGE SCALE GENOMIC DNA]</scope>
    <source>
        <strain>ATCC 31267 / DSM 46492 / JCM 5070 / NBRC 14893 / NCIMB 12804 / NRRL 8165 / MA-4680</strain>
    </source>
</reference>
<reference key="2">
    <citation type="journal article" date="2003" name="Nat. Biotechnol.">
        <title>Complete genome sequence and comparative analysis of the industrial microorganism Streptomyces avermitilis.</title>
        <authorList>
            <person name="Ikeda H."/>
            <person name="Ishikawa J."/>
            <person name="Hanamoto A."/>
            <person name="Shinose M."/>
            <person name="Kikuchi H."/>
            <person name="Shiba T."/>
            <person name="Sakaki Y."/>
            <person name="Hattori M."/>
            <person name="Omura S."/>
        </authorList>
    </citation>
    <scope>NUCLEOTIDE SEQUENCE [LARGE SCALE GENOMIC DNA]</scope>
    <source>
        <strain>ATCC 31267 / DSM 46492 / JCM 5070 / NBRC 14893 / NCIMB 12804 / NRRL 8165 / MA-4680</strain>
    </source>
</reference>
<keyword id="KW-1185">Reference proteome</keyword>
<keyword id="KW-0808">Transferase</keyword>
<comment type="function">
    <text evidence="1">Involved in the catabolism of oxalate and in the adapatation to low pH via the induction of the oxalate-dependent acid tolerance response (ATR). Catalyzes the transfer of the CoA moiety from formyl-CoA to oxalate (By similarity).</text>
</comment>
<comment type="catalytic activity">
    <reaction evidence="2">
        <text>formyl-CoA + oxalate = oxalyl-CoA + formate</text>
        <dbReference type="Rhea" id="RHEA:16545"/>
        <dbReference type="ChEBI" id="CHEBI:15740"/>
        <dbReference type="ChEBI" id="CHEBI:30623"/>
        <dbReference type="ChEBI" id="CHEBI:57376"/>
        <dbReference type="ChEBI" id="CHEBI:57388"/>
        <dbReference type="EC" id="2.8.3.16"/>
    </reaction>
</comment>
<comment type="pathway">
    <text evidence="2">Metabolic intermediate degradation; oxalate degradation; CO(2) and formate from oxalate: step 1/2.</text>
</comment>
<comment type="subunit">
    <text evidence="2">Homodimer.</text>
</comment>
<comment type="similarity">
    <text evidence="2">Belongs to the CoA-transferase III family. Frc subfamily.</text>
</comment>
<organism>
    <name type="scientific">Streptomyces avermitilis (strain ATCC 31267 / DSM 46492 / JCM 5070 / NBRC 14893 / NCIMB 12804 / NRRL 8165 / MA-4680)</name>
    <dbReference type="NCBI Taxonomy" id="227882"/>
    <lineage>
        <taxon>Bacteria</taxon>
        <taxon>Bacillati</taxon>
        <taxon>Actinomycetota</taxon>
        <taxon>Actinomycetes</taxon>
        <taxon>Kitasatosporales</taxon>
        <taxon>Streptomycetaceae</taxon>
        <taxon>Streptomyces</taxon>
    </lineage>
</organism>
<proteinExistence type="inferred from homology"/>
<accession>Q82M40</accession>